<comment type="function">
    <text evidence="1">This b-type cytochrome is tightly associated with the reaction center of photosystem II (PSII). PSII is a light-driven water:plastoquinone oxidoreductase that uses light energy to abstract electrons from H(2)O, generating O(2) and a proton gradient subsequently used for ATP formation. It consists of a core antenna complex that captures photons, and an electron transfer chain that converts photonic excitation into a charge separation.</text>
</comment>
<comment type="cofactor">
    <cofactor evidence="1">
        <name>heme b</name>
        <dbReference type="ChEBI" id="CHEBI:60344"/>
    </cofactor>
    <text evidence="1">With its partner (PsbF) binds heme. PSII binds additional chlorophylls, carotenoids and specific lipids.</text>
</comment>
<comment type="subunit">
    <text evidence="1">Heterodimer of an alpha subunit and a beta subunit. PSII is composed of 1 copy each of membrane proteins PsbA, PsbB, PsbC, PsbD, PsbE, PsbF, PsbH, PsbI, PsbJ, PsbK, PsbL, PsbM, PsbT, PsbX, PsbY, PsbZ, Psb30/Ycf12, at least 3 peripheral proteins of the oxygen-evolving complex and a large number of cofactors. It forms dimeric complexes.</text>
</comment>
<comment type="subcellular location">
    <subcellularLocation>
        <location evidence="1">Plastid</location>
        <location evidence="1">Chloroplast thylakoid membrane</location>
        <topology evidence="1">Single-pass membrane protein</topology>
    </subcellularLocation>
</comment>
<comment type="similarity">
    <text evidence="1">Belongs to the PsbE/PsbF family.</text>
</comment>
<protein>
    <recommendedName>
        <fullName evidence="1">Cytochrome b559 subunit alpha</fullName>
    </recommendedName>
    <alternativeName>
        <fullName evidence="1">PSII reaction center subunit V</fullName>
    </alternativeName>
</protein>
<name>PSBE_LIRTU</name>
<gene>
    <name evidence="1" type="primary">psbE</name>
</gene>
<organism>
    <name type="scientific">Liriodendron tulipifera</name>
    <name type="common">Tuliptree</name>
    <name type="synonym">Tulip poplar</name>
    <dbReference type="NCBI Taxonomy" id="3415"/>
    <lineage>
        <taxon>Eukaryota</taxon>
        <taxon>Viridiplantae</taxon>
        <taxon>Streptophyta</taxon>
        <taxon>Embryophyta</taxon>
        <taxon>Tracheophyta</taxon>
        <taxon>Spermatophyta</taxon>
        <taxon>Magnoliopsida</taxon>
        <taxon>Magnoliidae</taxon>
        <taxon>Magnoliales</taxon>
        <taxon>Magnoliaceae</taxon>
        <taxon>Liriodendron</taxon>
    </lineage>
</organism>
<dbReference type="EMBL" id="DQ899947">
    <property type="protein sequence ID" value="ABI32526.1"/>
    <property type="molecule type" value="Genomic_DNA"/>
</dbReference>
<dbReference type="RefSeq" id="YP_740219.1">
    <property type="nucleotide sequence ID" value="NC_008326.1"/>
</dbReference>
<dbReference type="SMR" id="Q0G9K2"/>
<dbReference type="GeneID" id="4266641"/>
<dbReference type="GO" id="GO:0009535">
    <property type="term" value="C:chloroplast thylakoid membrane"/>
    <property type="evidence" value="ECO:0007669"/>
    <property type="project" value="UniProtKB-SubCell"/>
</dbReference>
<dbReference type="GO" id="GO:0009539">
    <property type="term" value="C:photosystem II reaction center"/>
    <property type="evidence" value="ECO:0007669"/>
    <property type="project" value="InterPro"/>
</dbReference>
<dbReference type="GO" id="GO:0009055">
    <property type="term" value="F:electron transfer activity"/>
    <property type="evidence" value="ECO:0007669"/>
    <property type="project" value="UniProtKB-UniRule"/>
</dbReference>
<dbReference type="GO" id="GO:0020037">
    <property type="term" value="F:heme binding"/>
    <property type="evidence" value="ECO:0007669"/>
    <property type="project" value="InterPro"/>
</dbReference>
<dbReference type="GO" id="GO:0005506">
    <property type="term" value="F:iron ion binding"/>
    <property type="evidence" value="ECO:0007669"/>
    <property type="project" value="UniProtKB-UniRule"/>
</dbReference>
<dbReference type="GO" id="GO:0009767">
    <property type="term" value="P:photosynthetic electron transport chain"/>
    <property type="evidence" value="ECO:0007669"/>
    <property type="project" value="InterPro"/>
</dbReference>
<dbReference type="Gene3D" id="1.20.5.860">
    <property type="entry name" value="Photosystem II cytochrome b559, alpha subunit"/>
    <property type="match status" value="1"/>
</dbReference>
<dbReference type="HAMAP" id="MF_00642">
    <property type="entry name" value="PSII_PsbE"/>
    <property type="match status" value="1"/>
</dbReference>
<dbReference type="InterPro" id="IPR006217">
    <property type="entry name" value="PSII_cyt_b559_asu"/>
</dbReference>
<dbReference type="InterPro" id="IPR037025">
    <property type="entry name" value="PSII_cyt_b559_asu_sf"/>
</dbReference>
<dbReference type="InterPro" id="IPR006216">
    <property type="entry name" value="PSII_cyt_b559_CS"/>
</dbReference>
<dbReference type="InterPro" id="IPR013081">
    <property type="entry name" value="PSII_cyt_b559_N"/>
</dbReference>
<dbReference type="InterPro" id="IPR013082">
    <property type="entry name" value="PSII_cytb559_asu_lum"/>
</dbReference>
<dbReference type="NCBIfam" id="TIGR01332">
    <property type="entry name" value="cyt_b559_alpha"/>
    <property type="match status" value="1"/>
</dbReference>
<dbReference type="PANTHER" id="PTHR33391">
    <property type="entry name" value="CYTOCHROME B559 SUBUNIT BETA-RELATED"/>
    <property type="match status" value="1"/>
</dbReference>
<dbReference type="PANTHER" id="PTHR33391:SF9">
    <property type="entry name" value="CYTOCHROME B559 SUBUNIT BETA-RELATED"/>
    <property type="match status" value="1"/>
</dbReference>
<dbReference type="Pfam" id="PF00283">
    <property type="entry name" value="Cytochrom_B559"/>
    <property type="match status" value="1"/>
</dbReference>
<dbReference type="Pfam" id="PF00284">
    <property type="entry name" value="Cytochrom_B559a"/>
    <property type="match status" value="1"/>
</dbReference>
<dbReference type="PIRSF" id="PIRSF000036">
    <property type="entry name" value="PsbE"/>
    <property type="match status" value="1"/>
</dbReference>
<dbReference type="SUPFAM" id="SSF161045">
    <property type="entry name" value="Cytochrome b559 subunits"/>
    <property type="match status" value="1"/>
</dbReference>
<dbReference type="PROSITE" id="PS00537">
    <property type="entry name" value="CYTOCHROME_B559"/>
    <property type="match status" value="1"/>
</dbReference>
<geneLocation type="chloroplast"/>
<proteinExistence type="inferred from homology"/>
<feature type="chain" id="PRO_0000275710" description="Cytochrome b559 subunit alpha">
    <location>
        <begin position="1"/>
        <end position="83"/>
    </location>
</feature>
<feature type="transmembrane region" description="Helical" evidence="1">
    <location>
        <begin position="21"/>
        <end position="35"/>
    </location>
</feature>
<feature type="binding site" description="axial binding residue" evidence="1">
    <location>
        <position position="23"/>
    </location>
    <ligand>
        <name>heme</name>
        <dbReference type="ChEBI" id="CHEBI:30413"/>
        <note>ligand shared with beta subunit</note>
    </ligand>
    <ligandPart>
        <name>Fe</name>
        <dbReference type="ChEBI" id="CHEBI:18248"/>
    </ligandPart>
</feature>
<reference key="1">
    <citation type="journal article" date="2006" name="BMC Evol. Biol.">
        <title>Complete plastid genome sequences of Drimys, Liriodendron, and Piper: implications for the phylogenetic relationships of magnoliids.</title>
        <authorList>
            <person name="Cai Z."/>
            <person name="Penaflor C."/>
            <person name="Kuehl J.V."/>
            <person name="Leebens-Mack J."/>
            <person name="Carlson J.E."/>
            <person name="dePamphilis C.W."/>
            <person name="Boore J.L."/>
            <person name="Jansen R.K."/>
        </authorList>
    </citation>
    <scope>NUCLEOTIDE SEQUENCE [LARGE SCALE GENOMIC DNA]</scope>
</reference>
<sequence length="83" mass="9339">MSGSTGERSFADIITSIRYWVIHSITIPSLFIAGWLFVSTGLAYDVFGSPRPNEYFTESRQGIPLITGRFDPLAQLDEFSRSF</sequence>
<keyword id="KW-0150">Chloroplast</keyword>
<keyword id="KW-0249">Electron transport</keyword>
<keyword id="KW-0349">Heme</keyword>
<keyword id="KW-0408">Iron</keyword>
<keyword id="KW-0472">Membrane</keyword>
<keyword id="KW-0479">Metal-binding</keyword>
<keyword id="KW-0602">Photosynthesis</keyword>
<keyword id="KW-0604">Photosystem II</keyword>
<keyword id="KW-0934">Plastid</keyword>
<keyword id="KW-0793">Thylakoid</keyword>
<keyword id="KW-0812">Transmembrane</keyword>
<keyword id="KW-1133">Transmembrane helix</keyword>
<keyword id="KW-0813">Transport</keyword>
<accession>Q0G9K2</accession>
<evidence type="ECO:0000255" key="1">
    <source>
        <dbReference type="HAMAP-Rule" id="MF_00642"/>
    </source>
</evidence>